<evidence type="ECO:0000250" key="1"/>
<evidence type="ECO:0000256" key="2">
    <source>
        <dbReference type="SAM" id="MobiDB-lite"/>
    </source>
</evidence>
<evidence type="ECO:0000305" key="3"/>
<dbReference type="EMBL" id="CM000127">
    <property type="status" value="NOT_ANNOTATED_CDS"/>
    <property type="molecule type" value="Genomic_DNA"/>
</dbReference>
<dbReference type="SMR" id="A2X052"/>
<dbReference type="STRING" id="39946.A2X052"/>
<dbReference type="Proteomes" id="UP000007015">
    <property type="component" value="Chromosome 2"/>
</dbReference>
<dbReference type="GO" id="GO:0034274">
    <property type="term" value="C:Atg12-Atg5-Atg16 complex"/>
    <property type="evidence" value="ECO:0007669"/>
    <property type="project" value="TreeGrafter"/>
</dbReference>
<dbReference type="GO" id="GO:0005776">
    <property type="term" value="C:autophagosome"/>
    <property type="evidence" value="ECO:0007669"/>
    <property type="project" value="TreeGrafter"/>
</dbReference>
<dbReference type="GO" id="GO:0044233">
    <property type="term" value="C:mitochondria-associated endoplasmic reticulum membrane contact site"/>
    <property type="evidence" value="ECO:0007669"/>
    <property type="project" value="TreeGrafter"/>
</dbReference>
<dbReference type="GO" id="GO:0061908">
    <property type="term" value="C:phagophore"/>
    <property type="evidence" value="ECO:0007669"/>
    <property type="project" value="TreeGrafter"/>
</dbReference>
<dbReference type="GO" id="GO:0034045">
    <property type="term" value="C:phagophore assembly site membrane"/>
    <property type="evidence" value="ECO:0007669"/>
    <property type="project" value="TreeGrafter"/>
</dbReference>
<dbReference type="GO" id="GO:0019776">
    <property type="term" value="F:Atg8-family ligase activity"/>
    <property type="evidence" value="ECO:0007669"/>
    <property type="project" value="TreeGrafter"/>
</dbReference>
<dbReference type="GO" id="GO:0000422">
    <property type="term" value="P:autophagy of mitochondrion"/>
    <property type="evidence" value="ECO:0007669"/>
    <property type="project" value="TreeGrafter"/>
</dbReference>
<dbReference type="GO" id="GO:0006995">
    <property type="term" value="P:cellular response to nitrogen starvation"/>
    <property type="evidence" value="ECO:0007669"/>
    <property type="project" value="TreeGrafter"/>
</dbReference>
<dbReference type="GO" id="GO:0034727">
    <property type="term" value="P:piecemeal microautophagy of the nucleus"/>
    <property type="evidence" value="ECO:0007669"/>
    <property type="project" value="TreeGrafter"/>
</dbReference>
<dbReference type="GO" id="GO:0015031">
    <property type="term" value="P:protein transport"/>
    <property type="evidence" value="ECO:0007669"/>
    <property type="project" value="UniProtKB-KW"/>
</dbReference>
<dbReference type="FunFam" id="1.10.246.190:FF:000002">
    <property type="entry name" value="Autophagy protein 5"/>
    <property type="match status" value="1"/>
</dbReference>
<dbReference type="FunFam" id="3.10.20.620:FF:000002">
    <property type="entry name" value="Autophagy protein 5"/>
    <property type="match status" value="1"/>
</dbReference>
<dbReference type="FunFam" id="3.10.20.90:FF:000370">
    <property type="entry name" value="Autophagy protein 5"/>
    <property type="match status" value="1"/>
</dbReference>
<dbReference type="Gene3D" id="3.10.20.620">
    <property type="match status" value="1"/>
</dbReference>
<dbReference type="Gene3D" id="1.10.246.190">
    <property type="entry name" value="Autophagy protein Apg5, helix rich domain"/>
    <property type="match status" value="1"/>
</dbReference>
<dbReference type="Gene3D" id="3.10.20.90">
    <property type="entry name" value="Phosphatidylinositol 3-kinase Catalytic Subunit, Chain A, domain 1"/>
    <property type="match status" value="1"/>
</dbReference>
<dbReference type="InterPro" id="IPR007239">
    <property type="entry name" value="Atg5"/>
</dbReference>
<dbReference type="InterPro" id="IPR048940">
    <property type="entry name" value="ATG5_HBR"/>
</dbReference>
<dbReference type="InterPro" id="IPR042526">
    <property type="entry name" value="Atg5_HR"/>
</dbReference>
<dbReference type="InterPro" id="IPR048939">
    <property type="entry name" value="ATG5_UblA"/>
</dbReference>
<dbReference type="InterPro" id="IPR042527">
    <property type="entry name" value="Atg5_UblA_dom_sf"/>
</dbReference>
<dbReference type="InterPro" id="IPR048318">
    <property type="entry name" value="ATG5_UblB"/>
</dbReference>
<dbReference type="PANTHER" id="PTHR13040">
    <property type="entry name" value="AUTOPHAGY PROTEIN 5"/>
    <property type="match status" value="1"/>
</dbReference>
<dbReference type="PANTHER" id="PTHR13040:SF2">
    <property type="entry name" value="AUTOPHAGY PROTEIN 5"/>
    <property type="match status" value="1"/>
</dbReference>
<dbReference type="Pfam" id="PF20637">
    <property type="entry name" value="ATG5_HBR"/>
    <property type="match status" value="1"/>
</dbReference>
<dbReference type="Pfam" id="PF20638">
    <property type="entry name" value="ATG5_UblA"/>
    <property type="match status" value="1"/>
</dbReference>
<dbReference type="Pfam" id="PF04106">
    <property type="entry name" value="ATG5_UblB"/>
    <property type="match status" value="1"/>
</dbReference>
<protein>
    <recommendedName>
        <fullName>Autophagy protein 5</fullName>
    </recommendedName>
</protein>
<gene>
    <name type="primary">ATG5</name>
    <name type="synonym">APG5</name>
    <name type="ORF">OsI_005445</name>
</gene>
<reference key="1">
    <citation type="journal article" date="2005" name="PLoS Biol.">
        <title>The genomes of Oryza sativa: a history of duplications.</title>
        <authorList>
            <person name="Yu J."/>
            <person name="Wang J."/>
            <person name="Lin W."/>
            <person name="Li S."/>
            <person name="Li H."/>
            <person name="Zhou J."/>
            <person name="Ni P."/>
            <person name="Dong W."/>
            <person name="Hu S."/>
            <person name="Zeng C."/>
            <person name="Zhang J."/>
            <person name="Zhang Y."/>
            <person name="Li R."/>
            <person name="Xu Z."/>
            <person name="Li S."/>
            <person name="Li X."/>
            <person name="Zheng H."/>
            <person name="Cong L."/>
            <person name="Lin L."/>
            <person name="Yin J."/>
            <person name="Geng J."/>
            <person name="Li G."/>
            <person name="Shi J."/>
            <person name="Liu J."/>
            <person name="Lv H."/>
            <person name="Li J."/>
            <person name="Wang J."/>
            <person name="Deng Y."/>
            <person name="Ran L."/>
            <person name="Shi X."/>
            <person name="Wang X."/>
            <person name="Wu Q."/>
            <person name="Li C."/>
            <person name="Ren X."/>
            <person name="Wang J."/>
            <person name="Wang X."/>
            <person name="Li D."/>
            <person name="Liu D."/>
            <person name="Zhang X."/>
            <person name="Ji Z."/>
            <person name="Zhao W."/>
            <person name="Sun Y."/>
            <person name="Zhang Z."/>
            <person name="Bao J."/>
            <person name="Han Y."/>
            <person name="Dong L."/>
            <person name="Ji J."/>
            <person name="Chen P."/>
            <person name="Wu S."/>
            <person name="Liu J."/>
            <person name="Xiao Y."/>
            <person name="Bu D."/>
            <person name="Tan J."/>
            <person name="Yang L."/>
            <person name="Ye C."/>
            <person name="Zhang J."/>
            <person name="Xu J."/>
            <person name="Zhou Y."/>
            <person name="Yu Y."/>
            <person name="Zhang B."/>
            <person name="Zhuang S."/>
            <person name="Wei H."/>
            <person name="Liu B."/>
            <person name="Lei M."/>
            <person name="Yu H."/>
            <person name="Li Y."/>
            <person name="Xu H."/>
            <person name="Wei S."/>
            <person name="He X."/>
            <person name="Fang L."/>
            <person name="Zhang Z."/>
            <person name="Zhang Y."/>
            <person name="Huang X."/>
            <person name="Su Z."/>
            <person name="Tong W."/>
            <person name="Li J."/>
            <person name="Tong Z."/>
            <person name="Li S."/>
            <person name="Ye J."/>
            <person name="Wang L."/>
            <person name="Fang L."/>
            <person name="Lei T."/>
            <person name="Chen C.-S."/>
            <person name="Chen H.-C."/>
            <person name="Xu Z."/>
            <person name="Li H."/>
            <person name="Huang H."/>
            <person name="Zhang F."/>
            <person name="Xu H."/>
            <person name="Li N."/>
            <person name="Zhao C."/>
            <person name="Li S."/>
            <person name="Dong L."/>
            <person name="Huang Y."/>
            <person name="Li L."/>
            <person name="Xi Y."/>
            <person name="Qi Q."/>
            <person name="Li W."/>
            <person name="Zhang B."/>
            <person name="Hu W."/>
            <person name="Zhang Y."/>
            <person name="Tian X."/>
            <person name="Jiao Y."/>
            <person name="Liang X."/>
            <person name="Jin J."/>
            <person name="Gao L."/>
            <person name="Zheng W."/>
            <person name="Hao B."/>
            <person name="Liu S.-M."/>
            <person name="Wang W."/>
            <person name="Yuan L."/>
            <person name="Cao M."/>
            <person name="McDermott J."/>
            <person name="Samudrala R."/>
            <person name="Wang J."/>
            <person name="Wong G.K.-S."/>
            <person name="Yang H."/>
        </authorList>
    </citation>
    <scope>NUCLEOTIDE SEQUENCE [LARGE SCALE GENOMIC DNA]</scope>
    <source>
        <strain>cv. 93-11</strain>
    </source>
</reference>
<accession>A2X052</accession>
<organism>
    <name type="scientific">Oryza sativa subsp. indica</name>
    <name type="common">Rice</name>
    <dbReference type="NCBI Taxonomy" id="39946"/>
    <lineage>
        <taxon>Eukaryota</taxon>
        <taxon>Viridiplantae</taxon>
        <taxon>Streptophyta</taxon>
        <taxon>Embryophyta</taxon>
        <taxon>Tracheophyta</taxon>
        <taxon>Spermatophyta</taxon>
        <taxon>Magnoliopsida</taxon>
        <taxon>Liliopsida</taxon>
        <taxon>Poales</taxon>
        <taxon>Poaceae</taxon>
        <taxon>BOP clade</taxon>
        <taxon>Oryzoideae</taxon>
        <taxon>Oryzeae</taxon>
        <taxon>Oryzinae</taxon>
        <taxon>Oryza</taxon>
        <taxon>Oryza sativa</taxon>
    </lineage>
</organism>
<name>ATG5_ORYSI</name>
<proteinExistence type="inferred from homology"/>
<sequence>MAAQRDDEAGWSAEAARRVWGGAVPLQVHLHDADVTTLPPPPPFLTLGPRIGYLPLLVPIIKAHFSSTLPPGIDTVWFEYKGLPLKWYIPIGVLYDLLCADPERPWNLTVHFRGYPSEILTPCDGEDSVKWSYMNSLKEAAFIITGNSKNVMNMSQADQGALWQSVMKGNLDGYMNISTRLKLGPFEEDCLVRTSSVEGQQGSDEPESPGSGKPCRVPVRLYVRSVQEDLYDLEDALPVGDWESISYINRPFEVRREEGRSYITLEHALKTLLPEFFSSKASRIPDDSETAPQAPDSAPNDDSDVTPRSCEKLESSASSSPQEANVANKGKIVKLVRVQGIEVDMDIPFLWVANNLKNPECYLHICVYVGTRKREPKDGR</sequence>
<keyword id="KW-0072">Autophagy</keyword>
<keyword id="KW-0963">Cytoplasm</keyword>
<keyword id="KW-1017">Isopeptide bond</keyword>
<keyword id="KW-0653">Protein transport</keyword>
<keyword id="KW-1185">Reference proteome</keyword>
<keyword id="KW-0813">Transport</keyword>
<keyword id="KW-0832">Ubl conjugation</keyword>
<feature type="chain" id="PRO_0000287218" description="Autophagy protein 5">
    <location>
        <begin position="1"/>
        <end position="380"/>
    </location>
</feature>
<feature type="region of interest" description="Disordered" evidence="2">
    <location>
        <begin position="194"/>
        <end position="215"/>
    </location>
</feature>
<feature type="region of interest" description="Disordered" evidence="2">
    <location>
        <begin position="283"/>
        <end position="309"/>
    </location>
</feature>
<feature type="compositionally biased region" description="Polar residues" evidence="2">
    <location>
        <begin position="194"/>
        <end position="203"/>
    </location>
</feature>
<feature type="cross-link" description="Glycyl lysine isopeptide (Lys-Gly) (interchain with G-Cter in ATG12)" evidence="1">
    <location>
        <position position="138"/>
    </location>
</feature>
<comment type="function">
    <text evidence="1">Required for autophagy. Conjugation to ATG12 is essential for plant nutrient recycling (By similarity).</text>
</comment>
<comment type="subunit">
    <text evidence="1">Conjugated to ATG12.</text>
</comment>
<comment type="subcellular location">
    <subcellularLocation>
        <location evidence="1">Cytoplasm</location>
    </subcellularLocation>
</comment>
<comment type="PTM">
    <text evidence="1">Conjugated to ATG12; which is essential for autophagy.</text>
</comment>
<comment type="similarity">
    <text evidence="3">Belongs to the ATG5 family.</text>
</comment>
<comment type="sequence caution" evidence="3">
    <conflict type="frameshift">
        <sequence resource="EMBL" id="CM000127"/>
    </conflict>
</comment>